<protein>
    <recommendedName>
        <fullName>PHD finger protein 10</fullName>
    </recommendedName>
    <alternativeName>
        <fullName>BRG1-associated factor 45a</fullName>
        <shortName>BAF45a</shortName>
    </alternativeName>
</protein>
<gene>
    <name type="primary">Phf10</name>
    <name type="synonym">Baf45a</name>
</gene>
<feature type="chain" id="PRO_0000059298" description="PHD finger protein 10">
    <location>
        <begin position="1"/>
        <end position="497"/>
    </location>
</feature>
<feature type="zinc finger region" description="PHD-type 1; degenerate" evidence="3">
    <location>
        <begin position="378"/>
        <end position="435"/>
    </location>
</feature>
<feature type="zinc finger region" description="PHD-type 2; degenerate" evidence="3">
    <location>
        <begin position="437"/>
        <end position="480"/>
    </location>
</feature>
<feature type="region of interest" description="Disordered" evidence="4">
    <location>
        <begin position="1"/>
        <end position="61"/>
    </location>
</feature>
<feature type="region of interest" description="SAY">
    <location>
        <begin position="88"/>
        <end position="294"/>
    </location>
</feature>
<feature type="region of interest" description="Essential to induce neural progenitor proliferation">
    <location>
        <begin position="88"/>
        <end position="184"/>
    </location>
</feature>
<feature type="region of interest" description="Disordered" evidence="4">
    <location>
        <begin position="284"/>
        <end position="368"/>
    </location>
</feature>
<feature type="region of interest" description="Essential to induce neural progenitor proliferation">
    <location>
        <begin position="291"/>
        <end position="333"/>
    </location>
</feature>
<feature type="compositionally biased region" description="Low complexity" evidence="4">
    <location>
        <begin position="1"/>
        <end position="13"/>
    </location>
</feature>
<feature type="compositionally biased region" description="Low complexity" evidence="4">
    <location>
        <begin position="284"/>
        <end position="295"/>
    </location>
</feature>
<feature type="compositionally biased region" description="Acidic residues" evidence="4">
    <location>
        <begin position="296"/>
        <end position="307"/>
    </location>
</feature>
<feature type="compositionally biased region" description="Polar residues" evidence="4">
    <location>
        <begin position="317"/>
        <end position="327"/>
    </location>
</feature>
<feature type="compositionally biased region" description="Basic and acidic residues" evidence="4">
    <location>
        <begin position="337"/>
        <end position="358"/>
    </location>
</feature>
<feature type="modified residue" description="Phosphoserine" evidence="2">
    <location>
        <position position="11"/>
    </location>
</feature>
<feature type="modified residue" description="Phosphoserine" evidence="2">
    <location>
        <position position="35"/>
    </location>
</feature>
<feature type="modified residue" description="Phosphoserine" evidence="2">
    <location>
        <position position="49"/>
    </location>
</feature>
<feature type="modified residue" description="Phosphoserine" evidence="9">
    <location>
        <position position="269"/>
    </location>
</feature>
<feature type="modified residue" description="Phosphoserine" evidence="9">
    <location>
        <position position="296"/>
    </location>
</feature>
<feature type="modified residue" description="Phosphoserine" evidence="9">
    <location>
        <position position="300"/>
    </location>
</feature>
<feature type="modified residue" description="Phosphoserine" evidence="8 9">
    <location>
        <position position="326"/>
    </location>
</feature>
<feature type="modified residue" description="Phosphoserine" evidence="9">
    <location>
        <position position="330"/>
    </location>
</feature>
<feature type="cross-link" description="Glycyl lysine isopeptide (Lys-Gly) (interchain with G-Cter in SUMO2)" evidence="2">
    <location>
        <position position="240"/>
    </location>
</feature>
<feature type="cross-link" description="Glycyl lysine isopeptide (Lys-Gly) (interchain with G-Cter in SUMO2)" evidence="2">
    <location>
        <position position="384"/>
    </location>
</feature>
<feature type="splice variant" id="VSP_013441" description="In isoform 2." evidence="6">
    <location>
        <begin position="108"/>
        <end position="109"/>
    </location>
</feature>
<feature type="sequence conflict" description="In Ref. 1; BAB25323." evidence="7" ref="1">
    <original>T</original>
    <variation>A</variation>
    <location>
        <position position="2"/>
    </location>
</feature>
<feature type="sequence conflict" description="In Ref. 1; BAB25323." evidence="7" ref="1">
    <original>P</original>
    <variation>L</variation>
    <location>
        <position position="10"/>
    </location>
</feature>
<feature type="sequence conflict" description="In Ref. 1; BAB25323." evidence="7" ref="1">
    <original>S</original>
    <variation>Y</variation>
    <location>
        <position position="115"/>
    </location>
</feature>
<feature type="sequence conflict" description="In Ref. 1; BAB25323." evidence="7" ref="1">
    <original>M</original>
    <variation>V</variation>
    <location>
        <position position="349"/>
    </location>
</feature>
<feature type="sequence conflict" description="In Ref. 1; BAB25323." evidence="7" ref="1">
    <original>M</original>
    <variation>V</variation>
    <location>
        <position position="416"/>
    </location>
</feature>
<keyword id="KW-0025">Alternative splicing</keyword>
<keyword id="KW-1017">Isopeptide bond</keyword>
<keyword id="KW-0479">Metal-binding</keyword>
<keyword id="KW-0524">Neurogenesis</keyword>
<keyword id="KW-0539">Nucleus</keyword>
<keyword id="KW-0597">Phosphoprotein</keyword>
<keyword id="KW-1185">Reference proteome</keyword>
<keyword id="KW-0677">Repeat</keyword>
<keyword id="KW-0804">Transcription</keyword>
<keyword id="KW-0805">Transcription regulation</keyword>
<keyword id="KW-0832">Ubl conjugation</keyword>
<keyword id="KW-0862">Zinc</keyword>
<keyword id="KW-0863">Zinc-finger</keyword>
<dbReference type="EMBL" id="AK007873">
    <property type="protein sequence ID" value="BAB25323.1"/>
    <property type="status" value="ALT_INIT"/>
    <property type="molecule type" value="mRNA"/>
</dbReference>
<dbReference type="EMBL" id="AC154411">
    <property type="status" value="NOT_ANNOTATED_CDS"/>
    <property type="molecule type" value="Genomic_DNA"/>
</dbReference>
<dbReference type="EMBL" id="AC182749">
    <property type="status" value="NOT_ANNOTATED_CDS"/>
    <property type="molecule type" value="Genomic_DNA"/>
</dbReference>
<dbReference type="EMBL" id="BC002206">
    <property type="protein sequence ID" value="AAH02206.1"/>
    <property type="status" value="ALT_INIT"/>
    <property type="molecule type" value="mRNA"/>
</dbReference>
<dbReference type="CCDS" id="CCDS28407.2">
    <molecule id="Q9D8M7-1"/>
</dbReference>
<dbReference type="RefSeq" id="NP_077212.3">
    <property type="nucleotide sequence ID" value="NM_024250.4"/>
</dbReference>
<dbReference type="SMR" id="Q9D8M7"/>
<dbReference type="BioGRID" id="215123">
    <property type="interactions" value="7"/>
</dbReference>
<dbReference type="ComplexPortal" id="CPX-1248">
    <property type="entry name" value="Polybromo-associated SWI/SNF ATP-dependent chromatin remodeling complex, ACTL6A variant"/>
</dbReference>
<dbReference type="ComplexPortal" id="CPX-1250">
    <property type="entry name" value="Polybromo-associated SWI/SNF ATP-dependent chromatin remodeling complex, ACTL6B variant"/>
</dbReference>
<dbReference type="ComplexPortal" id="CPX-1251">
    <property type="entry name" value="Embryonic stem cell-specific SWI/SNF ATP-dependent chromatin remodeling complex"/>
</dbReference>
<dbReference type="ComplexPortal" id="CPX-1252">
    <property type="entry name" value="Neural progenitor-specific SWI/SNF ATP-dependent chromatin remodeling complex, ARID1A-SMARCA2 variant"/>
</dbReference>
<dbReference type="ComplexPortal" id="CPX-1253">
    <property type="entry name" value="Neural progenitor-specific SWI/SNF ATP-dependent chromatin remodeling complex, ARID1A-SMARCA4 variant"/>
</dbReference>
<dbReference type="ComplexPortal" id="CPX-1254">
    <property type="entry name" value="Neural progenitor-specific SWI/SNF ATP-dependent chromatin remodeling complex, ARID1B-SMARCA2 variant"/>
</dbReference>
<dbReference type="ComplexPortal" id="CPX-1255">
    <property type="entry name" value="Neural progenitor-specific SWI/SNF ATP-dependent chromatin remodeling complex, ARID1B-SMARCA4 variant"/>
</dbReference>
<dbReference type="FunCoup" id="Q9D8M7">
    <property type="interactions" value="1228"/>
</dbReference>
<dbReference type="IntAct" id="Q9D8M7">
    <property type="interactions" value="2"/>
</dbReference>
<dbReference type="MINT" id="Q9D8M7"/>
<dbReference type="STRING" id="10090.ENSMUSP00000024657"/>
<dbReference type="GlyGen" id="Q9D8M7">
    <property type="glycosylation" value="2 sites, 1 O-linked glycan (1 site)"/>
</dbReference>
<dbReference type="iPTMnet" id="Q9D8M7"/>
<dbReference type="PhosphoSitePlus" id="Q9D8M7"/>
<dbReference type="jPOST" id="Q9D8M7"/>
<dbReference type="PaxDb" id="10090-ENSMUSP00000024657"/>
<dbReference type="ProteomicsDB" id="289491">
    <molecule id="Q9D8M7-1"/>
</dbReference>
<dbReference type="ProteomicsDB" id="289492">
    <molecule id="Q9D8M7-2"/>
</dbReference>
<dbReference type="Pumba" id="Q9D8M7"/>
<dbReference type="DNASU" id="72057"/>
<dbReference type="GeneID" id="72057"/>
<dbReference type="KEGG" id="mmu:72057"/>
<dbReference type="UCSC" id="uc008anj.2">
    <molecule id="Q9D8M7-2"/>
    <property type="organism name" value="mouse"/>
</dbReference>
<dbReference type="AGR" id="MGI:1919307"/>
<dbReference type="CTD" id="55274"/>
<dbReference type="MGI" id="MGI:1919307">
    <property type="gene designation" value="Phf10"/>
</dbReference>
<dbReference type="eggNOG" id="KOG1512">
    <property type="taxonomic scope" value="Eukaryota"/>
</dbReference>
<dbReference type="InParanoid" id="Q9D8M7"/>
<dbReference type="OrthoDB" id="1903104at2759"/>
<dbReference type="BioGRID-ORCS" id="72057">
    <property type="hits" value="3 hits in 82 CRISPR screens"/>
</dbReference>
<dbReference type="PRO" id="PR:Q9D8M7"/>
<dbReference type="Proteomes" id="UP000000589">
    <property type="component" value="Unplaced"/>
</dbReference>
<dbReference type="RNAct" id="Q9D8M7">
    <property type="molecule type" value="protein"/>
</dbReference>
<dbReference type="GO" id="GO:0000785">
    <property type="term" value="C:chromatin"/>
    <property type="evidence" value="ECO:0000303"/>
    <property type="project" value="ComplexPortal"/>
</dbReference>
<dbReference type="GO" id="GO:0000776">
    <property type="term" value="C:kinetochore"/>
    <property type="evidence" value="ECO:0000303"/>
    <property type="project" value="ComplexPortal"/>
</dbReference>
<dbReference type="GO" id="GO:0071564">
    <property type="term" value="C:npBAF complex"/>
    <property type="evidence" value="ECO:0000314"/>
    <property type="project" value="UniProtKB"/>
</dbReference>
<dbReference type="GO" id="GO:0016363">
    <property type="term" value="C:nuclear matrix"/>
    <property type="evidence" value="ECO:0000303"/>
    <property type="project" value="ComplexPortal"/>
</dbReference>
<dbReference type="GO" id="GO:0016586">
    <property type="term" value="C:RSC-type complex"/>
    <property type="evidence" value="ECO:0000303"/>
    <property type="project" value="ComplexPortal"/>
</dbReference>
<dbReference type="GO" id="GO:0016514">
    <property type="term" value="C:SWI/SNF complex"/>
    <property type="evidence" value="ECO:0000303"/>
    <property type="project" value="ComplexPortal"/>
</dbReference>
<dbReference type="GO" id="GO:0008270">
    <property type="term" value="F:zinc ion binding"/>
    <property type="evidence" value="ECO:0007669"/>
    <property type="project" value="UniProtKB-KW"/>
</dbReference>
<dbReference type="GO" id="GO:0006338">
    <property type="term" value="P:chromatin remodeling"/>
    <property type="evidence" value="ECO:0000303"/>
    <property type="project" value="ComplexPortal"/>
</dbReference>
<dbReference type="GO" id="GO:0007399">
    <property type="term" value="P:nervous system development"/>
    <property type="evidence" value="ECO:0000315"/>
    <property type="project" value="UniProtKB"/>
</dbReference>
<dbReference type="GO" id="GO:0045597">
    <property type="term" value="P:positive regulation of cell differentiation"/>
    <property type="evidence" value="ECO:0000303"/>
    <property type="project" value="ComplexPortal"/>
</dbReference>
<dbReference type="GO" id="GO:2000781">
    <property type="term" value="P:positive regulation of double-strand break repair"/>
    <property type="evidence" value="ECO:0000303"/>
    <property type="project" value="ComplexPortal"/>
</dbReference>
<dbReference type="GO" id="GO:0045663">
    <property type="term" value="P:positive regulation of myoblast differentiation"/>
    <property type="evidence" value="ECO:0000303"/>
    <property type="project" value="ComplexPortal"/>
</dbReference>
<dbReference type="GO" id="GO:1902459">
    <property type="term" value="P:positive regulation of stem cell population maintenance"/>
    <property type="evidence" value="ECO:0000303"/>
    <property type="project" value="ComplexPortal"/>
</dbReference>
<dbReference type="GO" id="GO:0045582">
    <property type="term" value="P:positive regulation of T cell differentiation"/>
    <property type="evidence" value="ECO:0000303"/>
    <property type="project" value="ComplexPortal"/>
</dbReference>
<dbReference type="GO" id="GO:0070316">
    <property type="term" value="P:regulation of G0 to G1 transition"/>
    <property type="evidence" value="ECO:0000303"/>
    <property type="project" value="ComplexPortal"/>
</dbReference>
<dbReference type="GO" id="GO:2000045">
    <property type="term" value="P:regulation of G1/S transition of mitotic cell cycle"/>
    <property type="evidence" value="ECO:0000303"/>
    <property type="project" value="ComplexPortal"/>
</dbReference>
<dbReference type="GO" id="GO:0030071">
    <property type="term" value="P:regulation of mitotic metaphase/anaphase transition"/>
    <property type="evidence" value="ECO:0000303"/>
    <property type="project" value="ComplexPortal"/>
</dbReference>
<dbReference type="GO" id="GO:2000819">
    <property type="term" value="P:regulation of nucleotide-excision repair"/>
    <property type="evidence" value="ECO:0000303"/>
    <property type="project" value="ComplexPortal"/>
</dbReference>
<dbReference type="GO" id="GO:0006357">
    <property type="term" value="P:regulation of transcription by RNA polymerase II"/>
    <property type="evidence" value="ECO:0000303"/>
    <property type="project" value="ComplexPortal"/>
</dbReference>
<dbReference type="CDD" id="cd15528">
    <property type="entry name" value="PHD1_PHF10"/>
    <property type="match status" value="1"/>
</dbReference>
<dbReference type="CDD" id="cd15529">
    <property type="entry name" value="PHD2_PHF10"/>
    <property type="match status" value="1"/>
</dbReference>
<dbReference type="CDD" id="cd21085">
    <property type="entry name" value="WH_NTD_PHF10"/>
    <property type="match status" value="1"/>
</dbReference>
<dbReference type="FunFam" id="3.30.40.10:FF:001470">
    <property type="entry name" value="PHD finger protein 10"/>
    <property type="match status" value="1"/>
</dbReference>
<dbReference type="Gene3D" id="3.30.40.10">
    <property type="entry name" value="Zinc/RING finger domain, C3HC4 (zinc finger)"/>
    <property type="match status" value="1"/>
</dbReference>
<dbReference type="InterPro" id="IPR038045">
    <property type="entry name" value="PHF10_PHD_finger_1"/>
</dbReference>
<dbReference type="InterPro" id="IPR011011">
    <property type="entry name" value="Znf_FYVE_PHD"/>
</dbReference>
<dbReference type="InterPro" id="IPR001965">
    <property type="entry name" value="Znf_PHD"/>
</dbReference>
<dbReference type="InterPro" id="IPR019787">
    <property type="entry name" value="Znf_PHD-finger"/>
</dbReference>
<dbReference type="InterPro" id="IPR013083">
    <property type="entry name" value="Znf_RING/FYVE/PHD"/>
</dbReference>
<dbReference type="PANTHER" id="PTHR45888">
    <property type="entry name" value="HL01030P-RELATED"/>
    <property type="match status" value="1"/>
</dbReference>
<dbReference type="PANTHER" id="PTHR45888:SF4">
    <property type="entry name" value="PHD FINGER PROTEIN 10"/>
    <property type="match status" value="1"/>
</dbReference>
<dbReference type="Pfam" id="PF00628">
    <property type="entry name" value="PHD"/>
    <property type="match status" value="2"/>
</dbReference>
<dbReference type="SMART" id="SM00249">
    <property type="entry name" value="PHD"/>
    <property type="match status" value="2"/>
</dbReference>
<dbReference type="SUPFAM" id="SSF57903">
    <property type="entry name" value="FYVE/PHD zinc finger"/>
    <property type="match status" value="2"/>
</dbReference>
<dbReference type="PROSITE" id="PS01359">
    <property type="entry name" value="ZF_PHD_1"/>
    <property type="match status" value="1"/>
</dbReference>
<dbReference type="PROSITE" id="PS50016">
    <property type="entry name" value="ZF_PHD_2"/>
    <property type="match status" value="2"/>
</dbReference>
<sequence>MTAAGPGAAPSPGRCDSDPASPGAQSPKDDNEDNSNDGTHPCKRRRMGSGDSSRSCETSSQDLSFSYYPAENLIEYKWPPDETGEYYMLQEQVSEYLGVTSFKRKYPDLERRDLSHKEKLYLRELNVITETQCTLGLTALRSDEVIDLMIKEYPAKHAEYSVILQEKERQRITDHYKEYSQMQQQSTQKVEASKVPEYIKKAAKKAAEFNSNLNRERMEERRAYFDLQTHVIQVPQGKYKVLPTDRTKVSSYPVALIPGQFQEYYKRYSPDELRYLPLNTALYEPPLDPELPALDSDGDSDDGEDGGGDEKRKNKGTSDSSSGNVSEGDSPPDSQEDTFHGRQKSKDKMATPRKDGSKRSVLSKSAPGYKPKVIPNALCGICLKGKESNKKGKAESLIHCSQCDNSGHPSCLDMTMELVSMIKTYPWQCMECKTCIICGQPHHEEEMMFCDVCDRGYHTFCVGLGAIPSGRWICDCCQRAPPTPRKVGRRGKNSKEG</sequence>
<proteinExistence type="evidence at protein level"/>
<reference key="1">
    <citation type="journal article" date="2005" name="Science">
        <title>The transcriptional landscape of the mammalian genome.</title>
        <authorList>
            <person name="Carninci P."/>
            <person name="Kasukawa T."/>
            <person name="Katayama S."/>
            <person name="Gough J."/>
            <person name="Frith M.C."/>
            <person name="Maeda N."/>
            <person name="Oyama R."/>
            <person name="Ravasi T."/>
            <person name="Lenhard B."/>
            <person name="Wells C."/>
            <person name="Kodzius R."/>
            <person name="Shimokawa K."/>
            <person name="Bajic V.B."/>
            <person name="Brenner S.E."/>
            <person name="Batalov S."/>
            <person name="Forrest A.R."/>
            <person name="Zavolan M."/>
            <person name="Davis M.J."/>
            <person name="Wilming L.G."/>
            <person name="Aidinis V."/>
            <person name="Allen J.E."/>
            <person name="Ambesi-Impiombato A."/>
            <person name="Apweiler R."/>
            <person name="Aturaliya R.N."/>
            <person name="Bailey T.L."/>
            <person name="Bansal M."/>
            <person name="Baxter L."/>
            <person name="Beisel K.W."/>
            <person name="Bersano T."/>
            <person name="Bono H."/>
            <person name="Chalk A.M."/>
            <person name="Chiu K.P."/>
            <person name="Choudhary V."/>
            <person name="Christoffels A."/>
            <person name="Clutterbuck D.R."/>
            <person name="Crowe M.L."/>
            <person name="Dalla E."/>
            <person name="Dalrymple B.P."/>
            <person name="de Bono B."/>
            <person name="Della Gatta G."/>
            <person name="di Bernardo D."/>
            <person name="Down T."/>
            <person name="Engstrom P."/>
            <person name="Fagiolini M."/>
            <person name="Faulkner G."/>
            <person name="Fletcher C.F."/>
            <person name="Fukushima T."/>
            <person name="Furuno M."/>
            <person name="Futaki S."/>
            <person name="Gariboldi M."/>
            <person name="Georgii-Hemming P."/>
            <person name="Gingeras T.R."/>
            <person name="Gojobori T."/>
            <person name="Green R.E."/>
            <person name="Gustincich S."/>
            <person name="Harbers M."/>
            <person name="Hayashi Y."/>
            <person name="Hensch T.K."/>
            <person name="Hirokawa N."/>
            <person name="Hill D."/>
            <person name="Huminiecki L."/>
            <person name="Iacono M."/>
            <person name="Ikeo K."/>
            <person name="Iwama A."/>
            <person name="Ishikawa T."/>
            <person name="Jakt M."/>
            <person name="Kanapin A."/>
            <person name="Katoh M."/>
            <person name="Kawasawa Y."/>
            <person name="Kelso J."/>
            <person name="Kitamura H."/>
            <person name="Kitano H."/>
            <person name="Kollias G."/>
            <person name="Krishnan S.P."/>
            <person name="Kruger A."/>
            <person name="Kummerfeld S.K."/>
            <person name="Kurochkin I.V."/>
            <person name="Lareau L.F."/>
            <person name="Lazarevic D."/>
            <person name="Lipovich L."/>
            <person name="Liu J."/>
            <person name="Liuni S."/>
            <person name="McWilliam S."/>
            <person name="Madan Babu M."/>
            <person name="Madera M."/>
            <person name="Marchionni L."/>
            <person name="Matsuda H."/>
            <person name="Matsuzawa S."/>
            <person name="Miki H."/>
            <person name="Mignone F."/>
            <person name="Miyake S."/>
            <person name="Morris K."/>
            <person name="Mottagui-Tabar S."/>
            <person name="Mulder N."/>
            <person name="Nakano N."/>
            <person name="Nakauchi H."/>
            <person name="Ng P."/>
            <person name="Nilsson R."/>
            <person name="Nishiguchi S."/>
            <person name="Nishikawa S."/>
            <person name="Nori F."/>
            <person name="Ohara O."/>
            <person name="Okazaki Y."/>
            <person name="Orlando V."/>
            <person name="Pang K.C."/>
            <person name="Pavan W.J."/>
            <person name="Pavesi G."/>
            <person name="Pesole G."/>
            <person name="Petrovsky N."/>
            <person name="Piazza S."/>
            <person name="Reed J."/>
            <person name="Reid J.F."/>
            <person name="Ring B.Z."/>
            <person name="Ringwald M."/>
            <person name="Rost B."/>
            <person name="Ruan Y."/>
            <person name="Salzberg S.L."/>
            <person name="Sandelin A."/>
            <person name="Schneider C."/>
            <person name="Schoenbach C."/>
            <person name="Sekiguchi K."/>
            <person name="Semple C.A."/>
            <person name="Seno S."/>
            <person name="Sessa L."/>
            <person name="Sheng Y."/>
            <person name="Shibata Y."/>
            <person name="Shimada H."/>
            <person name="Shimada K."/>
            <person name="Silva D."/>
            <person name="Sinclair B."/>
            <person name="Sperling S."/>
            <person name="Stupka E."/>
            <person name="Sugiura K."/>
            <person name="Sultana R."/>
            <person name="Takenaka Y."/>
            <person name="Taki K."/>
            <person name="Tammoja K."/>
            <person name="Tan S.L."/>
            <person name="Tang S."/>
            <person name="Taylor M.S."/>
            <person name="Tegner J."/>
            <person name="Teichmann S.A."/>
            <person name="Ueda H.R."/>
            <person name="van Nimwegen E."/>
            <person name="Verardo R."/>
            <person name="Wei C.L."/>
            <person name="Yagi K."/>
            <person name="Yamanishi H."/>
            <person name="Zabarovsky E."/>
            <person name="Zhu S."/>
            <person name="Zimmer A."/>
            <person name="Hide W."/>
            <person name="Bult C."/>
            <person name="Grimmond S.M."/>
            <person name="Teasdale R.D."/>
            <person name="Liu E.T."/>
            <person name="Brusic V."/>
            <person name="Quackenbush J."/>
            <person name="Wahlestedt C."/>
            <person name="Mattick J.S."/>
            <person name="Hume D.A."/>
            <person name="Kai C."/>
            <person name="Sasaki D."/>
            <person name="Tomaru Y."/>
            <person name="Fukuda S."/>
            <person name="Kanamori-Katayama M."/>
            <person name="Suzuki M."/>
            <person name="Aoki J."/>
            <person name="Arakawa T."/>
            <person name="Iida J."/>
            <person name="Imamura K."/>
            <person name="Itoh M."/>
            <person name="Kato T."/>
            <person name="Kawaji H."/>
            <person name="Kawagashira N."/>
            <person name="Kawashima T."/>
            <person name="Kojima M."/>
            <person name="Kondo S."/>
            <person name="Konno H."/>
            <person name="Nakano K."/>
            <person name="Ninomiya N."/>
            <person name="Nishio T."/>
            <person name="Okada M."/>
            <person name="Plessy C."/>
            <person name="Shibata K."/>
            <person name="Shiraki T."/>
            <person name="Suzuki S."/>
            <person name="Tagami M."/>
            <person name="Waki K."/>
            <person name="Watahiki A."/>
            <person name="Okamura-Oho Y."/>
            <person name="Suzuki H."/>
            <person name="Kawai J."/>
            <person name="Hayashizaki Y."/>
        </authorList>
    </citation>
    <scope>NUCLEOTIDE SEQUENCE [LARGE SCALE MRNA] (ISOFORM 1)</scope>
    <source>
        <strain>C57BL/6J</strain>
        <tissue>Pancreas</tissue>
    </source>
</reference>
<reference key="2">
    <citation type="journal article" date="2009" name="PLoS Biol.">
        <title>Lineage-specific biology revealed by a finished genome assembly of the mouse.</title>
        <authorList>
            <person name="Church D.M."/>
            <person name="Goodstadt L."/>
            <person name="Hillier L.W."/>
            <person name="Zody M.C."/>
            <person name="Goldstein S."/>
            <person name="She X."/>
            <person name="Bult C.J."/>
            <person name="Agarwala R."/>
            <person name="Cherry J.L."/>
            <person name="DiCuccio M."/>
            <person name="Hlavina W."/>
            <person name="Kapustin Y."/>
            <person name="Meric P."/>
            <person name="Maglott D."/>
            <person name="Birtle Z."/>
            <person name="Marques A.C."/>
            <person name="Graves T."/>
            <person name="Zhou S."/>
            <person name="Teague B."/>
            <person name="Potamousis K."/>
            <person name="Churas C."/>
            <person name="Place M."/>
            <person name="Herschleb J."/>
            <person name="Runnheim R."/>
            <person name="Forrest D."/>
            <person name="Amos-Landgraf J."/>
            <person name="Schwartz D.C."/>
            <person name="Cheng Z."/>
            <person name="Lindblad-Toh K."/>
            <person name="Eichler E.E."/>
            <person name="Ponting C.P."/>
        </authorList>
    </citation>
    <scope>NUCLEOTIDE SEQUENCE [LARGE SCALE GENOMIC DNA]</scope>
    <source>
        <strain>C57BL/6J</strain>
    </source>
</reference>
<reference key="3">
    <citation type="journal article" date="2004" name="Genome Res.">
        <title>The status, quality, and expansion of the NIH full-length cDNA project: the Mammalian Gene Collection (MGC).</title>
        <authorList>
            <consortium name="The MGC Project Team"/>
        </authorList>
    </citation>
    <scope>NUCLEOTIDE SEQUENCE [LARGE SCALE MRNA] OF 66-497 (ISOFORM 2)</scope>
    <source>
        <strain>FVB/N</strain>
        <tissue>Mammary tumor</tissue>
    </source>
</reference>
<reference key="4">
    <citation type="journal article" date="2007" name="Neuron">
        <title>An essential switch in subunit composition of a chromatin remodeling complex during neural development.</title>
        <authorList>
            <person name="Lessard J."/>
            <person name="Wu J.I."/>
            <person name="Ranish J.A."/>
            <person name="Wan M."/>
            <person name="Winslow M.M."/>
            <person name="Staahl B.T."/>
            <person name="Wu H."/>
            <person name="Aebersold R."/>
            <person name="Graef I.A."/>
            <person name="Crabtree G.R."/>
        </authorList>
    </citation>
    <scope>FUNCTION</scope>
    <scope>FUNCTION OF THE NBAF AND NPBAF COMPLEXES</scope>
    <scope>IDENTIFICATION IN THE NPBAF COMPLEX</scope>
    <scope>INTERACTION WITH ACTL6A; SMARCA2; SMARCA4 AND PBRM1</scope>
    <scope>DEVELOPMENTAL STAGE</scope>
    <scope>TISSUE SPECIFICITY</scope>
    <scope>IDENTIFICATION BY MASS SPECTROMETRY</scope>
</reference>
<reference key="5">
    <citation type="journal article" date="2009" name="Immunity">
        <title>The phagosomal proteome in interferon-gamma-activated macrophages.</title>
        <authorList>
            <person name="Trost M."/>
            <person name="English L."/>
            <person name="Lemieux S."/>
            <person name="Courcelles M."/>
            <person name="Desjardins M."/>
            <person name="Thibault P."/>
        </authorList>
    </citation>
    <scope>PHOSPHORYLATION [LARGE SCALE ANALYSIS] AT SER-326</scope>
    <scope>IDENTIFICATION BY MASS SPECTROMETRY [LARGE SCALE ANALYSIS]</scope>
</reference>
<reference key="6">
    <citation type="journal article" date="2010" name="Cell">
        <title>A tissue-specific atlas of mouse protein phosphorylation and expression.</title>
        <authorList>
            <person name="Huttlin E.L."/>
            <person name="Jedrychowski M.P."/>
            <person name="Elias J.E."/>
            <person name="Goswami T."/>
            <person name="Rad R."/>
            <person name="Beausoleil S.A."/>
            <person name="Villen J."/>
            <person name="Haas W."/>
            <person name="Sowa M.E."/>
            <person name="Gygi S.P."/>
        </authorList>
    </citation>
    <scope>PHOSPHORYLATION [LARGE SCALE ANALYSIS] AT SER-269; SER-296; SER-300; SER-326 AND SER-330</scope>
    <scope>IDENTIFICATION BY MASS SPECTROMETRY [LARGE SCALE ANALYSIS]</scope>
    <source>
        <tissue>Pancreas</tissue>
        <tissue>Spleen</tissue>
        <tissue>Testis</tissue>
    </source>
</reference>
<organism>
    <name type="scientific">Mus musculus</name>
    <name type="common">Mouse</name>
    <dbReference type="NCBI Taxonomy" id="10090"/>
    <lineage>
        <taxon>Eukaryota</taxon>
        <taxon>Metazoa</taxon>
        <taxon>Chordata</taxon>
        <taxon>Craniata</taxon>
        <taxon>Vertebrata</taxon>
        <taxon>Euteleostomi</taxon>
        <taxon>Mammalia</taxon>
        <taxon>Eutheria</taxon>
        <taxon>Euarchontoglires</taxon>
        <taxon>Glires</taxon>
        <taxon>Rodentia</taxon>
        <taxon>Myomorpha</taxon>
        <taxon>Muroidea</taxon>
        <taxon>Muridae</taxon>
        <taxon>Murinae</taxon>
        <taxon>Mus</taxon>
        <taxon>Mus</taxon>
    </lineage>
</organism>
<accession>Q9D8M7</accession>
<accession>E9QLI2</accession>
<accession>Q99LV5</accession>
<comment type="function">
    <text evidence="5">Involved in transcription activity regulation by chromatin remodeling. Belongs to the neural progenitors-specific chromatin remodeling complex (npBAF complex) and is required for the proliferation of neural progenitors. During neural development a switch from a stem/progenitor to a post-mitotic chromatin remodeling mechanism occurs as neurons exit the cell cycle and become committed to their adult state. The transition from proliferating neural stem/progenitor cells to post-mitotic neurons requires a switch in subunit composition of the npBAF and nBAF complexes. As neural progenitors exit mitosis and differentiate into neurons, npBAF complexes which contain ACTL6A/BAF53A and PHF10/BAF45A, are exchanged for homologous alternative ACTL6B/BAF53B and DPF1/BAF45B or DPF3/BAF45C subunits in neuron-specific complexes (nBAF). The npBAF complex is essential for the self-renewal/proliferative capacity of the multipotent neural stem cells. The nBAF complex along with CREST plays a role regulating the activity of genes essential for dendrite growth.</text>
</comment>
<comment type="subunit">
    <text evidence="5">Component of neural progenitors-specific chromatin remodeling complex (npBAF complex) composed of at least, ARID1A/BAF250A or ARID1B/BAF250B, SMARCD1/BAF60A, SMARCD3/BAF60C, SMARCA2/BRM/BAF190B, SMARCA4/BRG1/BAF190A, SMARCB1/BAF47, SMARCC1/BAF155, SMARCE1/BAF57, SMARCC2/BAF170, PHF10/BAF45A, ACTL6A/BAF53A and actin. Interacts with ACTL6A/BAF53A, SMARCA2/BRM/BAF190B, SMARCA4/BRG1/BAF190A and PBRM1/BAF180.</text>
</comment>
<comment type="subcellular location">
    <subcellularLocation>
        <location evidence="1">Nucleus</location>
    </subcellularLocation>
</comment>
<comment type="alternative products">
    <event type="alternative splicing"/>
    <isoform>
        <id>Q9D8M7-1</id>
        <name>1</name>
        <sequence type="displayed"/>
    </isoform>
    <isoform>
        <id>Q9D8M7-2</id>
        <name>2</name>
        <sequence type="described" ref="VSP_013441"/>
    </isoform>
</comment>
<comment type="tissue specificity">
    <text evidence="5">Widely expressed. Expressed selectively in neural stem and progenitor cells (at protein level).</text>
</comment>
<comment type="developmental stage">
    <text evidence="5">Expressed in neural cells at 10.5-11.5 dpc. At 10.5 to 16.5 dpc, in the developing spinal cord, specifically expressed in proliferating neural progenitors of the ventricular zone. In the developing forebrain and cerebellar primordium, expression is restricted to proliferating neuroepithelial progenitors and cerebellar granule precursors.</text>
</comment>
<comment type="similarity">
    <text evidence="7">Belongs to the SAYP family.</text>
</comment>
<comment type="caution">
    <text evidence="7">It is uncertain whether Met-1 or Met-88 is the initiator.</text>
</comment>
<comment type="sequence caution" evidence="7">
    <conflict type="erroneous initiation">
        <sequence resource="EMBL-CDS" id="AAH02206"/>
    </conflict>
    <text>Truncated N-terminus.</text>
</comment>
<comment type="sequence caution" evidence="7">
    <conflict type="erroneous initiation">
        <sequence resource="EMBL-CDS" id="BAB25323"/>
    </conflict>
    <text>Truncated N-terminus.</text>
</comment>
<name>PHF10_MOUSE</name>
<evidence type="ECO:0000250" key="1"/>
<evidence type="ECO:0000250" key="2">
    <source>
        <dbReference type="UniProtKB" id="Q8WUB8"/>
    </source>
</evidence>
<evidence type="ECO:0000255" key="3">
    <source>
        <dbReference type="PROSITE-ProRule" id="PRU00146"/>
    </source>
</evidence>
<evidence type="ECO:0000256" key="4">
    <source>
        <dbReference type="SAM" id="MobiDB-lite"/>
    </source>
</evidence>
<evidence type="ECO:0000269" key="5">
    <source>
    </source>
</evidence>
<evidence type="ECO:0000303" key="6">
    <source>
    </source>
</evidence>
<evidence type="ECO:0000305" key="7"/>
<evidence type="ECO:0007744" key="8">
    <source>
    </source>
</evidence>
<evidence type="ECO:0007744" key="9">
    <source>
    </source>
</evidence>